<evidence type="ECO:0000255" key="1">
    <source>
        <dbReference type="HAMAP-Rule" id="MF_00679"/>
    </source>
</evidence>
<sequence length="622" mass="66019">MALLQISEPGMAPAPHQRRLAVGIDLGTTNSLVAAVRNSVPEVLPDEAGRVLLPSVVRYLEKGGRRIGHEAKEQAATDPRNTIVSVKRFMGRGKAEVEGAANAPYEFVDAPGMVQIRTIDGVKSPVEVSAEILATLRYRAEDSLGDDLVGAVITVPAYFDDAQRQATKDAARLAGLNVLRLLNEPTAAAIAYGLDNAAEGLYAVYDLGGGTFDLSILKLTKGVFEVLAAGGDSALGGDDFDHALFGHVLAQAGIDAKTLAPEDVRLLLDRVRVLKEALSSAPEAALDVTLSSGAHLVQTISHDTFASLVEPLVQRTLTPTRKALRDAQVTPADIKGVVLVGGATRMPVIRDAVAKYFGQPPLVNLDPDQVVALGAAIQADLLAGNRGTGDDWLLLDVIPLSLGVETMGGLVEKIIPRNSTIPIARAQEFTTFKDGQTAMAIHVVQGERELVADCRSLARFELRGIPPMTAGAARIRVTYQVDADGLLSVFAREQLSGVEASVVVKPSYGLADDDIAKMLEDSFKTAEIDMRARALREAQVEAERMLEATQAALAADGELLETDERAQVDALAAALRAVAQGDDTNAIEAATKALADGTDEFAARRMDKSIKRALSGRRLDEI</sequence>
<organism>
    <name type="scientific">Burkholderia cenocepacia (strain HI2424)</name>
    <dbReference type="NCBI Taxonomy" id="331272"/>
    <lineage>
        <taxon>Bacteria</taxon>
        <taxon>Pseudomonadati</taxon>
        <taxon>Pseudomonadota</taxon>
        <taxon>Betaproteobacteria</taxon>
        <taxon>Burkholderiales</taxon>
        <taxon>Burkholderiaceae</taxon>
        <taxon>Burkholderia</taxon>
        <taxon>Burkholderia cepacia complex</taxon>
    </lineage>
</organism>
<reference key="1">
    <citation type="submission" date="2006-08" db="EMBL/GenBank/DDBJ databases">
        <title>Complete sequence of chromosome 1 of Burkholderia cenocepacia HI2424.</title>
        <authorList>
            <person name="Copeland A."/>
            <person name="Lucas S."/>
            <person name="Lapidus A."/>
            <person name="Barry K."/>
            <person name="Detter J.C."/>
            <person name="Glavina del Rio T."/>
            <person name="Hammon N."/>
            <person name="Israni S."/>
            <person name="Pitluck S."/>
            <person name="Chain P."/>
            <person name="Malfatti S."/>
            <person name="Shin M."/>
            <person name="Vergez L."/>
            <person name="Schmutz J."/>
            <person name="Larimer F."/>
            <person name="Land M."/>
            <person name="Hauser L."/>
            <person name="Kyrpides N."/>
            <person name="Kim E."/>
            <person name="LiPuma J.J."/>
            <person name="Gonzalez C.F."/>
            <person name="Konstantinidis K."/>
            <person name="Tiedje J.M."/>
            <person name="Richardson P."/>
        </authorList>
    </citation>
    <scope>NUCLEOTIDE SEQUENCE [LARGE SCALE GENOMIC DNA]</scope>
    <source>
        <strain>HI2424</strain>
    </source>
</reference>
<keyword id="KW-0067">ATP-binding</keyword>
<keyword id="KW-0143">Chaperone</keyword>
<keyword id="KW-0547">Nucleotide-binding</keyword>
<gene>
    <name evidence="1" type="primary">hscA</name>
    <name type="ordered locus">Bcen2424_2122</name>
</gene>
<protein>
    <recommendedName>
        <fullName evidence="1">Chaperone protein HscA homolog</fullName>
    </recommendedName>
</protein>
<feature type="chain" id="PRO_1000044844" description="Chaperone protein HscA homolog">
    <location>
        <begin position="1"/>
        <end position="622"/>
    </location>
</feature>
<accession>A0K8P6</accession>
<proteinExistence type="inferred from homology"/>
<name>HSCA_BURCH</name>
<comment type="function">
    <text evidence="1">Chaperone involved in the maturation of iron-sulfur cluster-containing proteins. Has a low intrinsic ATPase activity which is markedly stimulated by HscB.</text>
</comment>
<comment type="similarity">
    <text evidence="1">Belongs to the heat shock protein 70 family.</text>
</comment>
<dbReference type="EMBL" id="CP000458">
    <property type="protein sequence ID" value="ABK08873.1"/>
    <property type="molecule type" value="Genomic_DNA"/>
</dbReference>
<dbReference type="RefSeq" id="WP_011549463.1">
    <property type="nucleotide sequence ID" value="NC_008542.1"/>
</dbReference>
<dbReference type="SMR" id="A0K8P6"/>
<dbReference type="KEGG" id="bch:Bcen2424_2122"/>
<dbReference type="HOGENOM" id="CLU_005965_2_4_4"/>
<dbReference type="GO" id="GO:0005524">
    <property type="term" value="F:ATP binding"/>
    <property type="evidence" value="ECO:0007669"/>
    <property type="project" value="UniProtKB-KW"/>
</dbReference>
<dbReference type="GO" id="GO:0016887">
    <property type="term" value="F:ATP hydrolysis activity"/>
    <property type="evidence" value="ECO:0007669"/>
    <property type="project" value="UniProtKB-UniRule"/>
</dbReference>
<dbReference type="GO" id="GO:0140662">
    <property type="term" value="F:ATP-dependent protein folding chaperone"/>
    <property type="evidence" value="ECO:0007669"/>
    <property type="project" value="InterPro"/>
</dbReference>
<dbReference type="GO" id="GO:0051082">
    <property type="term" value="F:unfolded protein binding"/>
    <property type="evidence" value="ECO:0007669"/>
    <property type="project" value="InterPro"/>
</dbReference>
<dbReference type="GO" id="GO:0016226">
    <property type="term" value="P:iron-sulfur cluster assembly"/>
    <property type="evidence" value="ECO:0007669"/>
    <property type="project" value="InterPro"/>
</dbReference>
<dbReference type="CDD" id="cd10236">
    <property type="entry name" value="ASKHA_NBD_HSP70_HscA"/>
    <property type="match status" value="1"/>
</dbReference>
<dbReference type="FunFam" id="3.30.420.40:FF:000046">
    <property type="entry name" value="Chaperone protein HscA"/>
    <property type="match status" value="1"/>
</dbReference>
<dbReference type="FunFam" id="2.60.34.10:FF:000005">
    <property type="entry name" value="Chaperone protein HscA homolog"/>
    <property type="match status" value="1"/>
</dbReference>
<dbReference type="Gene3D" id="1.20.1270.10">
    <property type="match status" value="1"/>
</dbReference>
<dbReference type="Gene3D" id="3.30.420.40">
    <property type="match status" value="2"/>
</dbReference>
<dbReference type="Gene3D" id="3.90.640.10">
    <property type="entry name" value="Actin, Chain A, domain 4"/>
    <property type="match status" value="1"/>
</dbReference>
<dbReference type="Gene3D" id="2.60.34.10">
    <property type="entry name" value="Substrate Binding Domain Of DNAk, Chain A, domain 1"/>
    <property type="match status" value="1"/>
</dbReference>
<dbReference type="HAMAP" id="MF_00679">
    <property type="entry name" value="HscA"/>
    <property type="match status" value="1"/>
</dbReference>
<dbReference type="InterPro" id="IPR043129">
    <property type="entry name" value="ATPase_NBD"/>
</dbReference>
<dbReference type="InterPro" id="IPR018181">
    <property type="entry name" value="Heat_shock_70_CS"/>
</dbReference>
<dbReference type="InterPro" id="IPR042039">
    <property type="entry name" value="HscA_NBD"/>
</dbReference>
<dbReference type="InterPro" id="IPR029048">
    <property type="entry name" value="HSP70_C_sf"/>
</dbReference>
<dbReference type="InterPro" id="IPR029047">
    <property type="entry name" value="HSP70_peptide-bd_sf"/>
</dbReference>
<dbReference type="InterPro" id="IPR013126">
    <property type="entry name" value="Hsp_70_fam"/>
</dbReference>
<dbReference type="InterPro" id="IPR010236">
    <property type="entry name" value="ISC_FeS_clus_asmbl_HscA"/>
</dbReference>
<dbReference type="NCBIfam" id="TIGR01991">
    <property type="entry name" value="HscA"/>
    <property type="match status" value="1"/>
</dbReference>
<dbReference type="NCBIfam" id="NF003520">
    <property type="entry name" value="PRK05183.1"/>
    <property type="match status" value="1"/>
</dbReference>
<dbReference type="PANTHER" id="PTHR19375">
    <property type="entry name" value="HEAT SHOCK PROTEIN 70KDA"/>
    <property type="match status" value="1"/>
</dbReference>
<dbReference type="Pfam" id="PF00012">
    <property type="entry name" value="HSP70"/>
    <property type="match status" value="1"/>
</dbReference>
<dbReference type="PRINTS" id="PR00301">
    <property type="entry name" value="HEATSHOCK70"/>
</dbReference>
<dbReference type="SUPFAM" id="SSF53067">
    <property type="entry name" value="Actin-like ATPase domain"/>
    <property type="match status" value="2"/>
</dbReference>
<dbReference type="SUPFAM" id="SSF100934">
    <property type="entry name" value="Heat shock protein 70kD (HSP70), C-terminal subdomain"/>
    <property type="match status" value="1"/>
</dbReference>
<dbReference type="SUPFAM" id="SSF100920">
    <property type="entry name" value="Heat shock protein 70kD (HSP70), peptide-binding domain"/>
    <property type="match status" value="1"/>
</dbReference>
<dbReference type="PROSITE" id="PS00297">
    <property type="entry name" value="HSP70_1"/>
    <property type="match status" value="1"/>
</dbReference>
<dbReference type="PROSITE" id="PS00329">
    <property type="entry name" value="HSP70_2"/>
    <property type="match status" value="1"/>
</dbReference>
<dbReference type="PROSITE" id="PS01036">
    <property type="entry name" value="HSP70_3"/>
    <property type="match status" value="1"/>
</dbReference>